<reference key="1">
    <citation type="journal article" date="1997" name="Arch. Biochem. Biophys.">
        <title>Hamster adapt78 mRNA is a Down syndrome critical region homologue that is inducible by oxidative stress.</title>
        <authorList>
            <person name="Crawford D.R."/>
            <person name="Leahy K.P."/>
            <person name="Abramova N."/>
            <person name="Lan L."/>
            <person name="Wang Y."/>
            <person name="Davies K.J."/>
        </authorList>
    </citation>
    <scope>NUCLEOTIDE SEQUENCE [MRNA]</scope>
</reference>
<protein>
    <recommendedName>
        <fullName>Calcipressin-1</fullName>
    </recommendedName>
    <alternativeName>
        <fullName>Down syndrome critical region protein 1 homolog</fullName>
    </alternativeName>
    <alternativeName>
        <fullName>Oxidative-induced protein Adapt78</fullName>
    </alternativeName>
    <alternativeName>
        <fullName>Regulator of calcineurin 1</fullName>
    </alternativeName>
</protein>
<dbReference type="EMBL" id="U60263">
    <property type="protein sequence ID" value="AAB68517.1"/>
    <property type="molecule type" value="mRNA"/>
</dbReference>
<dbReference type="RefSeq" id="NP_001233660.1">
    <property type="nucleotide sequence ID" value="NM_001246731.1"/>
</dbReference>
<dbReference type="SMR" id="O35847"/>
<dbReference type="PaxDb" id="10029-NP_001233660.1"/>
<dbReference type="Ensembl" id="ENSCGRT00001014165.1">
    <property type="protein sequence ID" value="ENSCGRP00001009945.1"/>
    <property type="gene ID" value="ENSCGRG00001011944.1"/>
</dbReference>
<dbReference type="GeneID" id="100689474"/>
<dbReference type="KEGG" id="cge:100689474"/>
<dbReference type="CTD" id="1827"/>
<dbReference type="eggNOG" id="KOG4019">
    <property type="taxonomic scope" value="Eukaryota"/>
</dbReference>
<dbReference type="GeneTree" id="ENSGT00940000159870"/>
<dbReference type="OMA" id="RIMQTRC"/>
<dbReference type="OrthoDB" id="17212at2759"/>
<dbReference type="Proteomes" id="UP000694386">
    <property type="component" value="Unplaced"/>
</dbReference>
<dbReference type="Proteomes" id="UP001108280">
    <property type="component" value="Chromosome 4"/>
</dbReference>
<dbReference type="GO" id="GO:0005737">
    <property type="term" value="C:cytoplasm"/>
    <property type="evidence" value="ECO:0007669"/>
    <property type="project" value="TreeGrafter"/>
</dbReference>
<dbReference type="GO" id="GO:0005634">
    <property type="term" value="C:nucleus"/>
    <property type="evidence" value="ECO:0007669"/>
    <property type="project" value="TreeGrafter"/>
</dbReference>
<dbReference type="GO" id="GO:0008597">
    <property type="term" value="F:calcium-dependent protein serine/threonine phosphatase regulator activity"/>
    <property type="evidence" value="ECO:0007669"/>
    <property type="project" value="TreeGrafter"/>
</dbReference>
<dbReference type="GO" id="GO:0003676">
    <property type="term" value="F:nucleic acid binding"/>
    <property type="evidence" value="ECO:0007669"/>
    <property type="project" value="InterPro"/>
</dbReference>
<dbReference type="GO" id="GO:0019722">
    <property type="term" value="P:calcium-mediated signaling"/>
    <property type="evidence" value="ECO:0007669"/>
    <property type="project" value="InterPro"/>
</dbReference>
<dbReference type="GO" id="GO:0070885">
    <property type="term" value="P:negative regulation of calcineurin-NFAT signaling cascade"/>
    <property type="evidence" value="ECO:0000250"/>
    <property type="project" value="UniProtKB"/>
</dbReference>
<dbReference type="CDD" id="cd12708">
    <property type="entry name" value="RRM_RCAN1"/>
    <property type="match status" value="1"/>
</dbReference>
<dbReference type="FunFam" id="3.30.70.330:FF:000221">
    <property type="entry name" value="calcipressin-1 isoform X1"/>
    <property type="match status" value="1"/>
</dbReference>
<dbReference type="Gene3D" id="3.30.70.330">
    <property type="match status" value="1"/>
</dbReference>
<dbReference type="InterPro" id="IPR006931">
    <property type="entry name" value="Calcipressin"/>
</dbReference>
<dbReference type="InterPro" id="IPR012677">
    <property type="entry name" value="Nucleotide-bd_a/b_plait_sf"/>
</dbReference>
<dbReference type="InterPro" id="IPR035979">
    <property type="entry name" value="RBD_domain_sf"/>
</dbReference>
<dbReference type="InterPro" id="IPR034906">
    <property type="entry name" value="RCAN1_RRM"/>
</dbReference>
<dbReference type="PANTHER" id="PTHR10300">
    <property type="entry name" value="CALCIPRESSIN"/>
    <property type="match status" value="1"/>
</dbReference>
<dbReference type="PANTHER" id="PTHR10300:SF4">
    <property type="entry name" value="CALCIPRESSIN-1"/>
    <property type="match status" value="1"/>
</dbReference>
<dbReference type="Pfam" id="PF04847">
    <property type="entry name" value="Calcipressin"/>
    <property type="match status" value="1"/>
</dbReference>
<dbReference type="SUPFAM" id="SSF54928">
    <property type="entry name" value="RNA-binding domain, RBD"/>
    <property type="match status" value="1"/>
</dbReference>
<evidence type="ECO:0000250" key="1">
    <source>
        <dbReference type="UniProtKB" id="P53805"/>
    </source>
</evidence>
<evidence type="ECO:0000250" key="2">
    <source>
        <dbReference type="UniProtKB" id="Q9JHG6"/>
    </source>
</evidence>
<evidence type="ECO:0000256" key="3">
    <source>
        <dbReference type="SAM" id="MobiDB-lite"/>
    </source>
</evidence>
<evidence type="ECO:0000305" key="4"/>
<sequence length="197" mass="22675">MHFRDFNYNFSSLIACVANGDVFSESETRAKFESLFRTYDKDITFQYFKSFKRVRINFSNPLSAADARLQLHKTEFLGKEMKLYFAQTLHIGSSHLAPPNPDKQFLISPPASPPVGWKQVEDATPVINYDLLYAISKLGPGEKYELHAATDTTPSVVVHVCESDQENEEEEEMERMKRPKPKIIQTRRPEYTPIHLS</sequence>
<proteinExistence type="evidence at transcript level"/>
<feature type="chain" id="PRO_0000211413" description="Calcipressin-1">
    <location>
        <begin position="1"/>
        <end position="197"/>
    </location>
</feature>
<feature type="region of interest" description="Disordered" evidence="3">
    <location>
        <begin position="163"/>
        <end position="197"/>
    </location>
</feature>
<feature type="compositionally biased region" description="Acidic residues" evidence="3">
    <location>
        <begin position="163"/>
        <end position="173"/>
    </location>
</feature>
<feature type="modified residue" description="Phosphoserine" evidence="1">
    <location>
        <position position="108"/>
    </location>
</feature>
<feature type="modified residue" description="Phosphoserine" evidence="1">
    <location>
        <position position="112"/>
    </location>
</feature>
<feature type="modified residue" description="Phosphoserine" evidence="2">
    <location>
        <position position="163"/>
    </location>
</feature>
<organism>
    <name type="scientific">Cricetulus griseus</name>
    <name type="common">Chinese hamster</name>
    <name type="synonym">Cricetulus barabensis griseus</name>
    <dbReference type="NCBI Taxonomy" id="10029"/>
    <lineage>
        <taxon>Eukaryota</taxon>
        <taxon>Metazoa</taxon>
        <taxon>Chordata</taxon>
        <taxon>Craniata</taxon>
        <taxon>Vertebrata</taxon>
        <taxon>Euteleostomi</taxon>
        <taxon>Mammalia</taxon>
        <taxon>Eutheria</taxon>
        <taxon>Euarchontoglires</taxon>
        <taxon>Glires</taxon>
        <taxon>Rodentia</taxon>
        <taxon>Myomorpha</taxon>
        <taxon>Muroidea</taxon>
        <taxon>Cricetidae</taxon>
        <taxon>Cricetinae</taxon>
        <taxon>Cricetulus</taxon>
    </lineage>
</organism>
<keyword id="KW-0597">Phosphoprotein</keyword>
<keyword id="KW-0346">Stress response</keyword>
<accession>O35847</accession>
<comment type="function">
    <text evidence="2">Inhibits calcineurin-dependent transcriptional responses by binding to the catalytic domain of calcineurin A. Could play a role during central nervous system development.</text>
</comment>
<comment type="subunit">
    <text evidence="1 2">Interacts with RAF1, PPP3R1 and PPP3CA.</text>
</comment>
<comment type="induction">
    <text>By oxidative stress.</text>
</comment>
<comment type="PTM">
    <text evidence="1">Phosphorylation increases its ability to inhibit calcineurin and decreases protein half-life.</text>
</comment>
<comment type="similarity">
    <text evidence="4">Belongs to the RCAN family.</text>
</comment>
<name>RCAN1_CRIGR</name>
<gene>
    <name type="primary">RCAN1</name>
    <name type="synonym">ADAPT78</name>
    <name type="synonym">DSCR1</name>
</gene>